<sequence>MVQRTRWRYSAIAHNYNSCRPMELGAGIAVGAWDGVWARARSAEFVAATDMGDPVYSAFMRYDDSAPLHAAVAADWATYVAADFNGGPFKYSIFPILYSFTASLVVTMGLTVIVFFNVRTKPHRGVPKLLRVAAVLACGNLLTFVVRAMMQLGRDHAEGVVPMNHILDMLWTDTAFNTVDILAVLILQLCQVQTVMRFFTRFQEKRLISLCGILLAVLSQVLWAIPPYSEAVSNHFMPLDDDKDMDVLPPFVYLVRIAQAGSYASFVLMHVFAKKKLCVQSVQMFLLTVLTVVVVVLQPAFFITDVTNVWIDNLSEIFSTTCYMGSTVIVWEWSNRLSILEARRQAQSILGRPVYEDEEQGYNFARYALKIQTALTSKSDEGDTTSATTFAAPRSARFEGKGGPQSPVYVQEGEQQAVMAFNKRMGTRALAHHVLDSIIYYTDKVVVKGLGNLSASLPSKTSSATSVRGRVRKRIGLEGANDVFVYRTKDLVFDSDEDIPRT</sequence>
<organism>
    <name type="scientific">Eremothecium gossypii (strain ATCC 10895 / CBS 109.51 / FGSC 9923 / NRRL Y-1056)</name>
    <name type="common">Yeast</name>
    <name type="synonym">Ashbya gossypii</name>
    <dbReference type="NCBI Taxonomy" id="284811"/>
    <lineage>
        <taxon>Eukaryota</taxon>
        <taxon>Fungi</taxon>
        <taxon>Dikarya</taxon>
        <taxon>Ascomycota</taxon>
        <taxon>Saccharomycotina</taxon>
        <taxon>Saccharomycetes</taxon>
        <taxon>Saccharomycetales</taxon>
        <taxon>Saccharomycetaceae</taxon>
        <taxon>Eremothecium</taxon>
    </lineage>
</organism>
<evidence type="ECO:0000250" key="1"/>
<evidence type="ECO:0000255" key="2"/>
<evidence type="ECO:0000256" key="3">
    <source>
        <dbReference type="SAM" id="MobiDB-lite"/>
    </source>
</evidence>
<evidence type="ECO:0000269" key="4">
    <source>
    </source>
</evidence>
<evidence type="ECO:0000305" key="5"/>
<accession>Q758G4</accession>
<name>PALH_EREGS</name>
<feature type="chain" id="PRO_0000058195" description="pH-response regulator protein palH/RIM21">
    <location>
        <begin position="1"/>
        <end position="502"/>
    </location>
</feature>
<feature type="topological domain" description="Extracellular" evidence="2">
    <location>
        <begin position="1"/>
        <end position="95"/>
    </location>
</feature>
<feature type="transmembrane region" description="Helical" evidence="2">
    <location>
        <begin position="96"/>
        <end position="116"/>
    </location>
</feature>
<feature type="topological domain" description="Cytoplasmic" evidence="2">
    <location>
        <begin position="117"/>
        <end position="131"/>
    </location>
</feature>
<feature type="transmembrane region" description="Helical" evidence="2">
    <location>
        <begin position="132"/>
        <end position="152"/>
    </location>
</feature>
<feature type="topological domain" description="Extracellular" evidence="2">
    <location>
        <begin position="153"/>
        <end position="165"/>
    </location>
</feature>
<feature type="transmembrane region" description="Helical" evidence="2">
    <location>
        <begin position="166"/>
        <end position="186"/>
    </location>
</feature>
<feature type="topological domain" description="Cytoplasmic" evidence="2">
    <location>
        <begin position="187"/>
        <end position="206"/>
    </location>
</feature>
<feature type="transmembrane region" description="Helical" evidence="2">
    <location>
        <begin position="207"/>
        <end position="227"/>
    </location>
</feature>
<feature type="topological domain" description="Extracellular" evidence="2">
    <location>
        <begin position="228"/>
        <end position="250"/>
    </location>
</feature>
<feature type="transmembrane region" description="Helical" evidence="2">
    <location>
        <begin position="251"/>
        <end position="271"/>
    </location>
</feature>
<feature type="topological domain" description="Cytoplasmic" evidence="2">
    <location>
        <begin position="272"/>
        <end position="283"/>
    </location>
</feature>
<feature type="transmembrane region" description="Helical" evidence="2">
    <location>
        <begin position="284"/>
        <end position="304"/>
    </location>
</feature>
<feature type="topological domain" description="Extracellular" evidence="2">
    <location>
        <begin position="305"/>
        <end position="313"/>
    </location>
</feature>
<feature type="transmembrane region" description="Helical" evidence="2">
    <location>
        <begin position="314"/>
        <end position="331"/>
    </location>
</feature>
<feature type="topological domain" description="Cytoplasmic" evidence="2">
    <location>
        <begin position="332"/>
        <end position="502"/>
    </location>
</feature>
<feature type="region of interest" description="Disordered" evidence="3">
    <location>
        <begin position="379"/>
        <end position="404"/>
    </location>
</feature>
<gene>
    <name type="primary">RIM21</name>
    <name type="synonym">PAL2</name>
    <name type="ordered locus">AEL202C</name>
</gene>
<reference key="1">
    <citation type="journal article" date="2004" name="Science">
        <title>The Ashbya gossypii genome as a tool for mapping the ancient Saccharomyces cerevisiae genome.</title>
        <authorList>
            <person name="Dietrich F.S."/>
            <person name="Voegeli S."/>
            <person name="Brachat S."/>
            <person name="Lerch A."/>
            <person name="Gates K."/>
            <person name="Steiner S."/>
            <person name="Mohr C."/>
            <person name="Poehlmann R."/>
            <person name="Luedi P."/>
            <person name="Choi S."/>
            <person name="Wing R.A."/>
            <person name="Flavier A."/>
            <person name="Gaffney T.D."/>
            <person name="Philippsen P."/>
        </authorList>
    </citation>
    <scope>NUCLEOTIDE SEQUENCE [LARGE SCALE GENOMIC DNA]</scope>
    <scope>FUNCTION</scope>
    <source>
        <strain>ATCC 10895 / CBS 109.51 / FGSC 9923 / NRRL Y-1056</strain>
    </source>
</reference>
<reference key="2">
    <citation type="journal article" date="2013" name="G3 (Bethesda)">
        <title>Genomes of Ashbya fungi isolated from insects reveal four mating-type loci, numerous translocations, lack of transposons, and distinct gene duplications.</title>
        <authorList>
            <person name="Dietrich F.S."/>
            <person name="Voegeli S."/>
            <person name="Kuo S."/>
            <person name="Philippsen P."/>
        </authorList>
    </citation>
    <scope>GENOME REANNOTATION</scope>
    <source>
        <strain>ATCC 10895 / CBS 109.51 / FGSC 9923 / NRRL Y-1056</strain>
    </source>
</reference>
<dbReference type="EMBL" id="AE016818">
    <property type="protein sequence ID" value="AAS52483.1"/>
    <property type="molecule type" value="Genomic_DNA"/>
</dbReference>
<dbReference type="RefSeq" id="NP_984659.1">
    <property type="nucleotide sequence ID" value="NM_210012.1"/>
</dbReference>
<dbReference type="FunCoup" id="Q758G4">
    <property type="interactions" value="60"/>
</dbReference>
<dbReference type="STRING" id="284811.Q758G4"/>
<dbReference type="EnsemblFungi" id="AAS52483">
    <property type="protein sequence ID" value="AAS52483"/>
    <property type="gene ID" value="AGOS_AEL202C"/>
</dbReference>
<dbReference type="GeneID" id="4620841"/>
<dbReference type="KEGG" id="ago:AGOS_AEL202C"/>
<dbReference type="eggNOG" id="ENOG502QWMT">
    <property type="taxonomic scope" value="Eukaryota"/>
</dbReference>
<dbReference type="HOGENOM" id="CLU_026111_0_0_1"/>
<dbReference type="InParanoid" id="Q758G4"/>
<dbReference type="OMA" id="CVVIPWE"/>
<dbReference type="OrthoDB" id="5393256at2759"/>
<dbReference type="Proteomes" id="UP000000591">
    <property type="component" value="Chromosome V"/>
</dbReference>
<dbReference type="GO" id="GO:0005886">
    <property type="term" value="C:plasma membrane"/>
    <property type="evidence" value="ECO:0000318"/>
    <property type="project" value="GO_Central"/>
</dbReference>
<dbReference type="GO" id="GO:0030437">
    <property type="term" value="P:ascospore formation"/>
    <property type="evidence" value="ECO:0007669"/>
    <property type="project" value="EnsemblFungi"/>
</dbReference>
<dbReference type="GO" id="GO:0071469">
    <property type="term" value="P:cellular response to alkaline pH"/>
    <property type="evidence" value="ECO:0007669"/>
    <property type="project" value="EnsemblFungi"/>
</dbReference>
<dbReference type="GO" id="GO:0071467">
    <property type="term" value="P:cellular response to pH"/>
    <property type="evidence" value="ECO:0000318"/>
    <property type="project" value="GO_Central"/>
</dbReference>
<dbReference type="GO" id="GO:0009272">
    <property type="term" value="P:fungal-type cell wall biogenesis"/>
    <property type="evidence" value="ECO:0007669"/>
    <property type="project" value="EnsemblFungi"/>
</dbReference>
<dbReference type="GO" id="GO:0001403">
    <property type="term" value="P:invasive growth in response to glucose limitation"/>
    <property type="evidence" value="ECO:0007669"/>
    <property type="project" value="EnsemblFungi"/>
</dbReference>
<dbReference type="GO" id="GO:0044088">
    <property type="term" value="P:regulation of vacuole organization"/>
    <property type="evidence" value="ECO:0007669"/>
    <property type="project" value="EnsemblFungi"/>
</dbReference>
<dbReference type="InterPro" id="IPR014844">
    <property type="entry name" value="PalH"/>
</dbReference>
<dbReference type="PANTHER" id="PTHR35779">
    <property type="entry name" value="PH-RESPONSE REGULATOR PROTEIN PALH/RIM21"/>
    <property type="match status" value="1"/>
</dbReference>
<dbReference type="PANTHER" id="PTHR35779:SF1">
    <property type="entry name" value="PH-RESPONSE REGULATOR PROTEIN PALH_RIM21"/>
    <property type="match status" value="1"/>
</dbReference>
<dbReference type="Pfam" id="PF08733">
    <property type="entry name" value="PalH"/>
    <property type="match status" value="1"/>
</dbReference>
<keyword id="KW-1003">Cell membrane</keyword>
<keyword id="KW-0472">Membrane</keyword>
<keyword id="KW-1185">Reference proteome</keyword>
<keyword id="KW-0812">Transmembrane</keyword>
<keyword id="KW-1133">Transmembrane helix</keyword>
<proteinExistence type="inferred from homology"/>
<comment type="function">
    <text evidence="4">Required for the proteolytic cleavage of the transcription factor RIM101 in response to alkaline ambient pH.</text>
</comment>
<comment type="subcellular location">
    <subcellularLocation>
        <location evidence="1">Cell membrane</location>
        <topology evidence="1">Multi-pass membrane protein</topology>
    </subcellularLocation>
</comment>
<comment type="similarity">
    <text evidence="5">Belongs to the palH/RIM21 family.</text>
</comment>
<protein>
    <recommendedName>
        <fullName>pH-response regulator protein palH/RIM21</fullName>
    </recommendedName>
</protein>